<name>CHM4B_DANRE</name>
<proteinExistence type="evidence at transcript level"/>
<accession>Q7ZVC4</accession>
<evidence type="ECO:0000250" key="1">
    <source>
        <dbReference type="UniProtKB" id="Q9H444"/>
    </source>
</evidence>
<evidence type="ECO:0000255" key="2"/>
<evidence type="ECO:0000256" key="3">
    <source>
        <dbReference type="SAM" id="MobiDB-lite"/>
    </source>
</evidence>
<evidence type="ECO:0000305" key="4"/>
<comment type="function">
    <text evidence="1">Probable core component of the endosomal sorting required for transport complex III (ESCRT-III) which is involved in multivesicular bodies (MVBs) formation and sorting of endosomal cargo proteins into MVBs. MVBs contain intraluminal vesicles (ILVs) that are generated by invagination and scission from the limiting membrane of the endosome and mostly are delivered to lysosomes enabling degradation of membrane proteins, such as stimulated growth factor receptors, lysosomal enzymes and lipids (By similarity).</text>
</comment>
<comment type="subunit">
    <text evidence="1">Probable core component of the endosomal sorting required for transport complex III (ESCRT-III). ESCRT-III components are thought to multimerize to form a flat lattice on the perimeter membrane of the endosome (By similarity).</text>
</comment>
<comment type="subcellular location">
    <subcellularLocation>
        <location evidence="1">Cytoplasm</location>
        <location evidence="1">Cytosol</location>
    </subcellularLocation>
    <subcellularLocation>
        <location evidence="1">Late endosome membrane</location>
        <topology evidence="1">Peripheral membrane protein</topology>
    </subcellularLocation>
    <subcellularLocation>
        <location evidence="1">Midbody</location>
    </subcellularLocation>
</comment>
<comment type="similarity">
    <text evidence="4">Belongs to the SNF7 family.</text>
</comment>
<dbReference type="EMBL" id="BC045919">
    <property type="protein sequence ID" value="AAH45919.1"/>
    <property type="molecule type" value="mRNA"/>
</dbReference>
<dbReference type="RefSeq" id="NP_956489.1">
    <property type="nucleotide sequence ID" value="NM_200195.1"/>
</dbReference>
<dbReference type="SMR" id="Q7ZVC4"/>
<dbReference type="FunCoup" id="Q7ZVC4">
    <property type="interactions" value="2297"/>
</dbReference>
<dbReference type="STRING" id="7955.ENSDARP00000017897"/>
<dbReference type="PaxDb" id="7955-ENSDARP00000017897"/>
<dbReference type="GeneID" id="393164"/>
<dbReference type="KEGG" id="dre:393164"/>
<dbReference type="AGR" id="ZFIN:ZDB-GENE-040426-906"/>
<dbReference type="CTD" id="393164"/>
<dbReference type="ZFIN" id="ZDB-GENE-040426-906">
    <property type="gene designation" value="chmp4ba"/>
</dbReference>
<dbReference type="eggNOG" id="KOG1656">
    <property type="taxonomic scope" value="Eukaryota"/>
</dbReference>
<dbReference type="InParanoid" id="Q7ZVC4"/>
<dbReference type="OrthoDB" id="5592979at2759"/>
<dbReference type="PhylomeDB" id="Q7ZVC4"/>
<dbReference type="PRO" id="PR:Q7ZVC4"/>
<dbReference type="Proteomes" id="UP000000437">
    <property type="component" value="Chromosome 6"/>
</dbReference>
<dbReference type="GO" id="GO:0009898">
    <property type="term" value="C:cytoplasmic side of plasma membrane"/>
    <property type="evidence" value="ECO:0000318"/>
    <property type="project" value="GO_Central"/>
</dbReference>
<dbReference type="GO" id="GO:0005829">
    <property type="term" value="C:cytosol"/>
    <property type="evidence" value="ECO:0007669"/>
    <property type="project" value="UniProtKB-SubCell"/>
</dbReference>
<dbReference type="GO" id="GO:0000815">
    <property type="term" value="C:ESCRT III complex"/>
    <property type="evidence" value="ECO:0000250"/>
    <property type="project" value="UniProtKB"/>
</dbReference>
<dbReference type="GO" id="GO:0031902">
    <property type="term" value="C:late endosome membrane"/>
    <property type="evidence" value="ECO:0007669"/>
    <property type="project" value="UniProtKB-SubCell"/>
</dbReference>
<dbReference type="GO" id="GO:0030496">
    <property type="term" value="C:midbody"/>
    <property type="evidence" value="ECO:0007669"/>
    <property type="project" value="UniProtKB-SubCell"/>
</dbReference>
<dbReference type="GO" id="GO:0005771">
    <property type="term" value="C:multivesicular body"/>
    <property type="evidence" value="ECO:0000318"/>
    <property type="project" value="GO_Central"/>
</dbReference>
<dbReference type="GO" id="GO:0005635">
    <property type="term" value="C:nuclear envelope"/>
    <property type="evidence" value="ECO:0000250"/>
    <property type="project" value="UniProtKB"/>
</dbReference>
<dbReference type="GO" id="GO:0060271">
    <property type="term" value="P:cilium assembly"/>
    <property type="evidence" value="ECO:0000316"/>
    <property type="project" value="ZFIN"/>
</dbReference>
<dbReference type="GO" id="GO:0010458">
    <property type="term" value="P:exit from mitosis"/>
    <property type="evidence" value="ECO:0000250"/>
    <property type="project" value="UniProtKB"/>
</dbReference>
<dbReference type="GO" id="GO:0032511">
    <property type="term" value="P:late endosome to vacuole transport via multivesicular body sorting pathway"/>
    <property type="evidence" value="ECO:0000318"/>
    <property type="project" value="GO_Central"/>
</dbReference>
<dbReference type="GO" id="GO:0090148">
    <property type="term" value="P:membrane fission"/>
    <property type="evidence" value="ECO:0000250"/>
    <property type="project" value="UniProtKB"/>
</dbReference>
<dbReference type="GO" id="GO:0000281">
    <property type="term" value="P:mitotic cytokinesis"/>
    <property type="evidence" value="ECO:0000250"/>
    <property type="project" value="UniProtKB"/>
</dbReference>
<dbReference type="GO" id="GO:0031468">
    <property type="term" value="P:nuclear membrane reassembly"/>
    <property type="evidence" value="ECO:0000250"/>
    <property type="project" value="UniProtKB"/>
</dbReference>
<dbReference type="GO" id="GO:0015031">
    <property type="term" value="P:protein transport"/>
    <property type="evidence" value="ECO:0007669"/>
    <property type="project" value="UniProtKB-KW"/>
</dbReference>
<dbReference type="GO" id="GO:0006900">
    <property type="term" value="P:vesicle budding from membrane"/>
    <property type="evidence" value="ECO:0000318"/>
    <property type="project" value="GO_Central"/>
</dbReference>
<dbReference type="FunFam" id="1.10.287.1060:FF:000001">
    <property type="entry name" value="Charged multivesicular body protein 4b"/>
    <property type="match status" value="1"/>
</dbReference>
<dbReference type="Gene3D" id="6.10.250.1710">
    <property type="match status" value="1"/>
</dbReference>
<dbReference type="Gene3D" id="1.10.287.1060">
    <property type="entry name" value="ESAT-6-like"/>
    <property type="match status" value="1"/>
</dbReference>
<dbReference type="InterPro" id="IPR005024">
    <property type="entry name" value="Snf7_fam"/>
</dbReference>
<dbReference type="PANTHER" id="PTHR22761">
    <property type="entry name" value="CHARGED MULTIVESICULAR BODY PROTEIN"/>
    <property type="match status" value="1"/>
</dbReference>
<dbReference type="PANTHER" id="PTHR22761:SF77">
    <property type="entry name" value="CHARGED MULTIVESICULAR BODY PROTEIN 4C"/>
    <property type="match status" value="1"/>
</dbReference>
<dbReference type="Pfam" id="PF03357">
    <property type="entry name" value="Snf7"/>
    <property type="match status" value="1"/>
</dbReference>
<protein>
    <recommendedName>
        <fullName>Charged multivesicular body protein 4b</fullName>
    </recommendedName>
    <alternativeName>
        <fullName>Chromatin-modifying protein 4b</fullName>
        <shortName>CHMP4b</shortName>
    </alternativeName>
</protein>
<gene>
    <name type="primary">chmp4b</name>
    <name type="ORF">zgc:56112</name>
</gene>
<sequence length="220" mass="24796">MSLFGKMFGSGGKGGKSASPQEAIQRLRETEEMLTKKQEFLEKKIEQELVTAKKNGTKNKRAALQALKRKKRYEKQLAQIDGTLSTIEFQREALENAHTNTEVIKNMGYAAKAMKAAHDNMDIDKVDELMQDIIEQQELAQEISDAISKPVGFGEEFDEDELLAELEELEQEELDKNLLEIGDNVPLPNVPSTSLPSRPAKKKEEEDEDDMKDLEAWAAN</sequence>
<feature type="chain" id="PRO_0000211492" description="Charged multivesicular body protein 4b">
    <location>
        <begin position="1"/>
        <end position="220"/>
    </location>
</feature>
<feature type="region of interest" description="Disordered" evidence="3">
    <location>
        <begin position="1"/>
        <end position="22"/>
    </location>
</feature>
<feature type="region of interest" description="Disordered" evidence="3">
    <location>
        <begin position="180"/>
        <end position="220"/>
    </location>
</feature>
<feature type="coiled-coil region" evidence="2">
    <location>
        <begin position="21"/>
        <end position="88"/>
    </location>
</feature>
<feature type="coiled-coil region" evidence="2">
    <location>
        <begin position="123"/>
        <end position="181"/>
    </location>
</feature>
<reference key="1">
    <citation type="submission" date="2003-01" db="EMBL/GenBank/DDBJ databases">
        <authorList>
            <consortium name="NIH - Zebrafish Gene Collection (ZGC) project"/>
        </authorList>
    </citation>
    <scope>NUCLEOTIDE SEQUENCE [LARGE SCALE MRNA]</scope>
</reference>
<organism>
    <name type="scientific">Danio rerio</name>
    <name type="common">Zebrafish</name>
    <name type="synonym">Brachydanio rerio</name>
    <dbReference type="NCBI Taxonomy" id="7955"/>
    <lineage>
        <taxon>Eukaryota</taxon>
        <taxon>Metazoa</taxon>
        <taxon>Chordata</taxon>
        <taxon>Craniata</taxon>
        <taxon>Vertebrata</taxon>
        <taxon>Euteleostomi</taxon>
        <taxon>Actinopterygii</taxon>
        <taxon>Neopterygii</taxon>
        <taxon>Teleostei</taxon>
        <taxon>Ostariophysi</taxon>
        <taxon>Cypriniformes</taxon>
        <taxon>Danionidae</taxon>
        <taxon>Danioninae</taxon>
        <taxon>Danio</taxon>
    </lineage>
</organism>
<keyword id="KW-0175">Coiled coil</keyword>
<keyword id="KW-0963">Cytoplasm</keyword>
<keyword id="KW-0967">Endosome</keyword>
<keyword id="KW-0472">Membrane</keyword>
<keyword id="KW-0653">Protein transport</keyword>
<keyword id="KW-1185">Reference proteome</keyword>
<keyword id="KW-0813">Transport</keyword>